<comment type="function">
    <text evidence="2">Involved in the production of polyhydroxyalkonic acids (PHAs), which are water-insoluble biopolymers used as intracellular energy reserve material when cells grow under conditions of nutrient limitation. PHAs are composed primarily of 3-hydroxybutyric acid (3HB) and 3-hydroxyvaleric acid (3HV). Required for the production of poly-beta-hydroxybutyrate (PHB) and poly(beta-hydroxybutyrate-co-beta-hydroxyvalerate) (PHBV).</text>
</comment>
<comment type="pathway">
    <text>Biopolymer metabolism; poly-(R)-3-hydroxybutanoate biosynthesis.</text>
</comment>
<comment type="subunit">
    <text evidence="1">Heterodimer with PhaC.</text>
</comment>
<comment type="biotechnology">
    <text>PHB and PHBV are desirable bioplastic due to their biodegradability, biocompatibility, and mechanical properties. However, PHBV has better mechanical properties than PHB.</text>
</comment>
<comment type="similarity">
    <text evidence="3">Belongs to the PHA/PHB synthase family.</text>
</comment>
<proteinExistence type="evidence at protein level"/>
<accession>Q5UYM1</accession>
<feature type="chain" id="PRO_0000428873" description="Poly(3-hydroxyalkanoate) polymerase subunit PhaE">
    <location>
        <begin position="1"/>
        <end position="181"/>
    </location>
</feature>
<organism>
    <name type="scientific">Haloarcula marismortui (strain ATCC 43049 / DSM 3752 / JCM 8966 / VKM B-1809)</name>
    <name type="common">Halobacterium marismortui</name>
    <dbReference type="NCBI Taxonomy" id="272569"/>
    <lineage>
        <taxon>Archaea</taxon>
        <taxon>Methanobacteriati</taxon>
        <taxon>Methanobacteriota</taxon>
        <taxon>Stenosarchaea group</taxon>
        <taxon>Halobacteria</taxon>
        <taxon>Halobacteriales</taxon>
        <taxon>Haloarculaceae</taxon>
        <taxon>Haloarcula</taxon>
    </lineage>
</organism>
<reference key="1">
    <citation type="journal article" date="2004" name="Genome Res.">
        <title>Genome sequence of Haloarcula marismortui: a halophilic archaeon from the Dead Sea.</title>
        <authorList>
            <person name="Baliga N.S."/>
            <person name="Bonneau R."/>
            <person name="Facciotti M.T."/>
            <person name="Pan M."/>
            <person name="Glusman G."/>
            <person name="Deutsch E.W."/>
            <person name="Shannon P."/>
            <person name="Chiu Y."/>
            <person name="Weng R.S."/>
            <person name="Gan R.R."/>
            <person name="Hung P."/>
            <person name="Date S.V."/>
            <person name="Marcotte E."/>
            <person name="Hood L."/>
            <person name="Ng W.V."/>
        </authorList>
    </citation>
    <scope>NUCLEOTIDE SEQUENCE [LARGE SCALE GENOMIC DNA]</scope>
    <source>
        <strain>ATCC 43049 / DSM 3752 / JCM 8966 / VKM B-1809</strain>
    </source>
</reference>
<reference key="2">
    <citation type="journal article" date="2007" name="Appl. Environ. Microbiol.">
        <title>Molecular characterization of the phaECHm genes, required for biosynthesis of poly(3-hydroxybutyrate) in the extremely halophilic archaeon Haloarcula marismortui.</title>
        <authorList>
            <person name="Han J."/>
            <person name="Lu Q."/>
            <person name="Zhou L."/>
            <person name="Zhou J."/>
            <person name="Xiang H."/>
        </authorList>
    </citation>
    <scope>FUNCTION</scope>
    <source>
        <strain>ATCC 43049 / DSM 3752 / JCM 8966 / VKM B-1809</strain>
    </source>
</reference>
<gene>
    <name type="primary">phaE</name>
    <name type="ordered locus">rrnAC2885</name>
</gene>
<dbReference type="EC" id="2.3.1.-"/>
<dbReference type="EMBL" id="AY596297">
    <property type="protein sequence ID" value="AAV47632.1"/>
    <property type="molecule type" value="Genomic_DNA"/>
</dbReference>
<dbReference type="RefSeq" id="WP_004960317.1">
    <property type="nucleotide sequence ID" value="NZ_CP039138.1"/>
</dbReference>
<dbReference type="SMR" id="Q5UYM1"/>
<dbReference type="STRING" id="272569.rrnAC2885"/>
<dbReference type="PaxDb" id="272569-rrnAC2885"/>
<dbReference type="EnsemblBacteria" id="AAV47632">
    <property type="protein sequence ID" value="AAV47632"/>
    <property type="gene ID" value="rrnAC2885"/>
</dbReference>
<dbReference type="KEGG" id="hma:rrnAC2885"/>
<dbReference type="PATRIC" id="fig|272569.17.peg.3453"/>
<dbReference type="eggNOG" id="arCOG06343">
    <property type="taxonomic scope" value="Archaea"/>
</dbReference>
<dbReference type="HOGENOM" id="CLU_1485849_0_0_2"/>
<dbReference type="UniPathway" id="UPA00917"/>
<dbReference type="Proteomes" id="UP000001169">
    <property type="component" value="Chromosome I"/>
</dbReference>
<dbReference type="GO" id="GO:0016746">
    <property type="term" value="F:acyltransferase activity"/>
    <property type="evidence" value="ECO:0007669"/>
    <property type="project" value="UniProtKB-KW"/>
</dbReference>
<dbReference type="GO" id="GO:0042621">
    <property type="term" value="P:poly(3-hydroxyalkanoate) biosynthetic process"/>
    <property type="evidence" value="ECO:0007669"/>
    <property type="project" value="UniProtKB-KW"/>
</dbReference>
<dbReference type="GO" id="GO:0042619">
    <property type="term" value="P:poly-hydroxybutyrate biosynthetic process"/>
    <property type="evidence" value="ECO:0007669"/>
    <property type="project" value="UniProtKB-KW"/>
</dbReference>
<dbReference type="InterPro" id="IPR010123">
    <property type="entry name" value="PHA_synth_III_E"/>
</dbReference>
<dbReference type="Pfam" id="PF09712">
    <property type="entry name" value="PHA_synth_III_E"/>
    <property type="match status" value="1"/>
</dbReference>
<evidence type="ECO:0000250" key="1"/>
<evidence type="ECO:0000269" key="2">
    <source>
    </source>
</evidence>
<evidence type="ECO:0000305" key="3"/>
<sequence length="181" mass="20640">MSNTNNIQEEWTEMVEEMNNAVADSMEQNMKAQAAFVESWADAVEDTIPEQDDLADGMDGYNRAYEEWMDAAEQMVERSTDAAQGEDVDPAEFRDIWLQSANEAFKHVMGTSAFAAANGQLVESMMEMQQEADDLSQDTLEQLGFPTRNDVDEIAERLIELERRQHAVEQKLDRVLEHLEE</sequence>
<protein>
    <recommendedName>
        <fullName>Poly(3-hydroxyalkanoate) polymerase subunit PhaE</fullName>
        <shortName>PHA polymerase</shortName>
        <ecNumber>2.3.1.-</ecNumber>
    </recommendedName>
    <alternativeName>
        <fullName>PHB synthase</fullName>
    </alternativeName>
    <alternativeName>
        <fullName>Poly(3-hydroxybutyrate) polymerase subunit PhaE</fullName>
        <shortName>PHB polymerase</shortName>
    </alternativeName>
    <alternativeName>
        <fullName>Polyhydroxyalkanoic acid synthase subunit PhaE</fullName>
        <shortName>PHA synthase</shortName>
    </alternativeName>
</protein>
<keyword id="KW-0012">Acyltransferase</keyword>
<keyword id="KW-0577">PHA biosynthesis</keyword>
<keyword id="KW-0583">PHB biosynthesis</keyword>
<keyword id="KW-1185">Reference proteome</keyword>
<keyword id="KW-0808">Transferase</keyword>
<name>PHAE_HALMA</name>